<organism>
    <name type="scientific">Marinobacter nauticus (strain ATCC 700491 / DSM 11845 / VT8)</name>
    <name type="common">Marinobacter aquaeolei</name>
    <dbReference type="NCBI Taxonomy" id="351348"/>
    <lineage>
        <taxon>Bacteria</taxon>
        <taxon>Pseudomonadati</taxon>
        <taxon>Pseudomonadota</taxon>
        <taxon>Gammaproteobacteria</taxon>
        <taxon>Pseudomonadales</taxon>
        <taxon>Marinobacteraceae</taxon>
        <taxon>Marinobacter</taxon>
    </lineage>
</organism>
<keyword id="KW-1003">Cell membrane</keyword>
<keyword id="KW-0285">Flavoprotein</keyword>
<keyword id="KW-0288">FMN</keyword>
<keyword id="KW-0472">Membrane</keyword>
<keyword id="KW-0560">Oxidoreductase</keyword>
<keyword id="KW-0665">Pyrimidine biosynthesis</keyword>
<reference key="1">
    <citation type="journal article" date="2011" name="Appl. Environ. Microbiol.">
        <title>Genomic potential of Marinobacter aquaeolei, a biogeochemical 'opportunitroph'.</title>
        <authorList>
            <person name="Singer E."/>
            <person name="Webb E.A."/>
            <person name="Nelson W.C."/>
            <person name="Heidelberg J.F."/>
            <person name="Ivanova N."/>
            <person name="Pati A."/>
            <person name="Edwards K.J."/>
        </authorList>
    </citation>
    <scope>NUCLEOTIDE SEQUENCE [LARGE SCALE GENOMIC DNA]</scope>
    <source>
        <strain>ATCC 700491 / DSM 11845 / VT8</strain>
    </source>
</reference>
<evidence type="ECO:0000255" key="1">
    <source>
        <dbReference type="HAMAP-Rule" id="MF_00225"/>
    </source>
</evidence>
<dbReference type="EC" id="1.3.5.2" evidence="1"/>
<dbReference type="EMBL" id="CP000514">
    <property type="protein sequence ID" value="ABM18129.1"/>
    <property type="molecule type" value="Genomic_DNA"/>
</dbReference>
<dbReference type="RefSeq" id="WP_011784547.1">
    <property type="nucleotide sequence ID" value="NC_008740.1"/>
</dbReference>
<dbReference type="SMR" id="A1TZG0"/>
<dbReference type="STRING" id="351348.Maqu_1037"/>
<dbReference type="KEGG" id="maq:Maqu_1037"/>
<dbReference type="eggNOG" id="COG0167">
    <property type="taxonomic scope" value="Bacteria"/>
</dbReference>
<dbReference type="HOGENOM" id="CLU_013640_2_0_6"/>
<dbReference type="OrthoDB" id="9802377at2"/>
<dbReference type="UniPathway" id="UPA00070">
    <property type="reaction ID" value="UER00946"/>
</dbReference>
<dbReference type="Proteomes" id="UP000000998">
    <property type="component" value="Chromosome"/>
</dbReference>
<dbReference type="GO" id="GO:0005737">
    <property type="term" value="C:cytoplasm"/>
    <property type="evidence" value="ECO:0007669"/>
    <property type="project" value="InterPro"/>
</dbReference>
<dbReference type="GO" id="GO:0005886">
    <property type="term" value="C:plasma membrane"/>
    <property type="evidence" value="ECO:0007669"/>
    <property type="project" value="UniProtKB-SubCell"/>
</dbReference>
<dbReference type="GO" id="GO:0106430">
    <property type="term" value="F:dihydroorotate dehydrogenase (quinone) activity"/>
    <property type="evidence" value="ECO:0007669"/>
    <property type="project" value="UniProtKB-EC"/>
</dbReference>
<dbReference type="GO" id="GO:0006207">
    <property type="term" value="P:'de novo' pyrimidine nucleobase biosynthetic process"/>
    <property type="evidence" value="ECO:0007669"/>
    <property type="project" value="InterPro"/>
</dbReference>
<dbReference type="GO" id="GO:0044205">
    <property type="term" value="P:'de novo' UMP biosynthetic process"/>
    <property type="evidence" value="ECO:0007669"/>
    <property type="project" value="UniProtKB-UniRule"/>
</dbReference>
<dbReference type="CDD" id="cd04738">
    <property type="entry name" value="DHOD_2_like"/>
    <property type="match status" value="1"/>
</dbReference>
<dbReference type="FunFam" id="3.20.20.70:FF:000028">
    <property type="entry name" value="Dihydroorotate dehydrogenase (quinone)"/>
    <property type="match status" value="1"/>
</dbReference>
<dbReference type="Gene3D" id="3.20.20.70">
    <property type="entry name" value="Aldolase class I"/>
    <property type="match status" value="1"/>
</dbReference>
<dbReference type="HAMAP" id="MF_00225">
    <property type="entry name" value="DHO_dh_type2"/>
    <property type="match status" value="1"/>
</dbReference>
<dbReference type="InterPro" id="IPR013785">
    <property type="entry name" value="Aldolase_TIM"/>
</dbReference>
<dbReference type="InterPro" id="IPR050074">
    <property type="entry name" value="DHO_dehydrogenase"/>
</dbReference>
<dbReference type="InterPro" id="IPR012135">
    <property type="entry name" value="Dihydroorotate_DH_1_2"/>
</dbReference>
<dbReference type="InterPro" id="IPR005719">
    <property type="entry name" value="Dihydroorotate_DH_2"/>
</dbReference>
<dbReference type="InterPro" id="IPR005720">
    <property type="entry name" value="Dihydroorotate_DH_cat"/>
</dbReference>
<dbReference type="InterPro" id="IPR001295">
    <property type="entry name" value="Dihydroorotate_DH_CS"/>
</dbReference>
<dbReference type="NCBIfam" id="NF003644">
    <property type="entry name" value="PRK05286.1-1"/>
    <property type="match status" value="1"/>
</dbReference>
<dbReference type="NCBIfam" id="NF003645">
    <property type="entry name" value="PRK05286.1-2"/>
    <property type="match status" value="1"/>
</dbReference>
<dbReference type="NCBIfam" id="NF003646">
    <property type="entry name" value="PRK05286.1-4"/>
    <property type="match status" value="1"/>
</dbReference>
<dbReference type="NCBIfam" id="NF003652">
    <property type="entry name" value="PRK05286.2-5"/>
    <property type="match status" value="1"/>
</dbReference>
<dbReference type="NCBIfam" id="TIGR01036">
    <property type="entry name" value="pyrD_sub2"/>
    <property type="match status" value="1"/>
</dbReference>
<dbReference type="PANTHER" id="PTHR48109:SF4">
    <property type="entry name" value="DIHYDROOROTATE DEHYDROGENASE (QUINONE), MITOCHONDRIAL"/>
    <property type="match status" value="1"/>
</dbReference>
<dbReference type="PANTHER" id="PTHR48109">
    <property type="entry name" value="DIHYDROOROTATE DEHYDROGENASE (QUINONE), MITOCHONDRIAL-RELATED"/>
    <property type="match status" value="1"/>
</dbReference>
<dbReference type="Pfam" id="PF01180">
    <property type="entry name" value="DHO_dh"/>
    <property type="match status" value="1"/>
</dbReference>
<dbReference type="PIRSF" id="PIRSF000164">
    <property type="entry name" value="DHO_oxidase"/>
    <property type="match status" value="1"/>
</dbReference>
<dbReference type="SUPFAM" id="SSF51395">
    <property type="entry name" value="FMN-linked oxidoreductases"/>
    <property type="match status" value="1"/>
</dbReference>
<dbReference type="PROSITE" id="PS00911">
    <property type="entry name" value="DHODEHASE_1"/>
    <property type="match status" value="1"/>
</dbReference>
<dbReference type="PROSITE" id="PS00912">
    <property type="entry name" value="DHODEHASE_2"/>
    <property type="match status" value="1"/>
</dbReference>
<feature type="chain" id="PRO_0000336473" description="Dihydroorotate dehydrogenase (quinone)">
    <location>
        <begin position="1"/>
        <end position="340"/>
    </location>
</feature>
<feature type="active site" description="Nucleophile" evidence="1">
    <location>
        <position position="174"/>
    </location>
</feature>
<feature type="binding site" evidence="1">
    <location>
        <begin position="61"/>
        <end position="65"/>
    </location>
    <ligand>
        <name>FMN</name>
        <dbReference type="ChEBI" id="CHEBI:58210"/>
    </ligand>
</feature>
<feature type="binding site" evidence="1">
    <location>
        <position position="65"/>
    </location>
    <ligand>
        <name>substrate</name>
    </ligand>
</feature>
<feature type="binding site" evidence="1">
    <location>
        <position position="85"/>
    </location>
    <ligand>
        <name>FMN</name>
        <dbReference type="ChEBI" id="CHEBI:58210"/>
    </ligand>
</feature>
<feature type="binding site" evidence="1">
    <location>
        <begin position="110"/>
        <end position="114"/>
    </location>
    <ligand>
        <name>substrate</name>
    </ligand>
</feature>
<feature type="binding site" evidence="1">
    <location>
        <position position="138"/>
    </location>
    <ligand>
        <name>FMN</name>
        <dbReference type="ChEBI" id="CHEBI:58210"/>
    </ligand>
</feature>
<feature type="binding site" evidence="1">
    <location>
        <position position="171"/>
    </location>
    <ligand>
        <name>FMN</name>
        <dbReference type="ChEBI" id="CHEBI:58210"/>
    </ligand>
</feature>
<feature type="binding site" evidence="1">
    <location>
        <position position="171"/>
    </location>
    <ligand>
        <name>substrate</name>
    </ligand>
</feature>
<feature type="binding site" evidence="1">
    <location>
        <position position="176"/>
    </location>
    <ligand>
        <name>substrate</name>
    </ligand>
</feature>
<feature type="binding site" evidence="1">
    <location>
        <position position="216"/>
    </location>
    <ligand>
        <name>FMN</name>
        <dbReference type="ChEBI" id="CHEBI:58210"/>
    </ligand>
</feature>
<feature type="binding site" evidence="1">
    <location>
        <position position="244"/>
    </location>
    <ligand>
        <name>FMN</name>
        <dbReference type="ChEBI" id="CHEBI:58210"/>
    </ligand>
</feature>
<feature type="binding site" evidence="1">
    <location>
        <begin position="245"/>
        <end position="246"/>
    </location>
    <ligand>
        <name>substrate</name>
    </ligand>
</feature>
<feature type="binding site" evidence="1">
    <location>
        <position position="267"/>
    </location>
    <ligand>
        <name>FMN</name>
        <dbReference type="ChEBI" id="CHEBI:58210"/>
    </ligand>
</feature>
<feature type="binding site" evidence="1">
    <location>
        <position position="296"/>
    </location>
    <ligand>
        <name>FMN</name>
        <dbReference type="ChEBI" id="CHEBI:58210"/>
    </ligand>
</feature>
<feature type="binding site" evidence="1">
    <location>
        <begin position="317"/>
        <end position="318"/>
    </location>
    <ligand>
        <name>FMN</name>
        <dbReference type="ChEBI" id="CHEBI:58210"/>
    </ligand>
</feature>
<name>PYRD_MARN8</name>
<proteinExistence type="inferred from homology"/>
<gene>
    <name evidence="1" type="primary">pyrD</name>
    <name type="ordered locus">Maqu_1037</name>
</gene>
<accession>A1TZG0</accession>
<protein>
    <recommendedName>
        <fullName evidence="1">Dihydroorotate dehydrogenase (quinone)</fullName>
        <ecNumber evidence="1">1.3.5.2</ecNumber>
    </recommendedName>
    <alternativeName>
        <fullName evidence="1">DHOdehase</fullName>
        <shortName evidence="1">DHOD</shortName>
        <shortName evidence="1">DHODase</shortName>
    </alternativeName>
    <alternativeName>
        <fullName evidence="1">Dihydroorotate oxidase</fullName>
    </alternativeName>
</protein>
<sequence>MYGLLRNLLFRLPPERAHNVALGSLDVAQKLGILNTFTRQPEPCPVNVMGLEFPNPVGLAAGLDKNADHIDALGALGFGFIEVGTVTPLAQPGNPKPRMFRLPEHQAIINRMGFNNEGLEHLITNVRHRRYRGVLGINVGKNKDTPNEQSEQDYRKGIAAVYPYADYITVNVSSPNTPGLRDLQFGDSLKQLLHAIKEEQAACEQKHGRYVPVAVKIAPDMDEQGIRFVAAALLEAGLDGVIATNTTISREAVKGHVHEQEAGGLSGAPVREASVKVIQGLYAELGDRLPIIGVGGITDGDSAAEKIRAGAKLVQIYTGFIYRGPSLINEAVEAIRKEIS</sequence>
<comment type="function">
    <text evidence="1">Catalyzes the conversion of dihydroorotate to orotate with quinone as electron acceptor.</text>
</comment>
<comment type="catalytic activity">
    <reaction evidence="1">
        <text>(S)-dihydroorotate + a quinone = orotate + a quinol</text>
        <dbReference type="Rhea" id="RHEA:30187"/>
        <dbReference type="ChEBI" id="CHEBI:24646"/>
        <dbReference type="ChEBI" id="CHEBI:30839"/>
        <dbReference type="ChEBI" id="CHEBI:30864"/>
        <dbReference type="ChEBI" id="CHEBI:132124"/>
        <dbReference type="EC" id="1.3.5.2"/>
    </reaction>
</comment>
<comment type="cofactor">
    <cofactor evidence="1">
        <name>FMN</name>
        <dbReference type="ChEBI" id="CHEBI:58210"/>
    </cofactor>
    <text evidence="1">Binds 1 FMN per subunit.</text>
</comment>
<comment type="pathway">
    <text evidence="1">Pyrimidine metabolism; UMP biosynthesis via de novo pathway; orotate from (S)-dihydroorotate (quinone route): step 1/1.</text>
</comment>
<comment type="subunit">
    <text evidence="1">Monomer.</text>
</comment>
<comment type="subcellular location">
    <subcellularLocation>
        <location evidence="1">Cell membrane</location>
        <topology evidence="1">Peripheral membrane protein</topology>
    </subcellularLocation>
</comment>
<comment type="similarity">
    <text evidence="1">Belongs to the dihydroorotate dehydrogenase family. Type 2 subfamily.</text>
</comment>